<feature type="chain" id="PRO_0000360121" description="Tryptophan 2,3-dioxygenase">
    <location>
        <begin position="1"/>
        <end position="282"/>
    </location>
</feature>
<feature type="binding site" evidence="1">
    <location>
        <begin position="51"/>
        <end position="55"/>
    </location>
    <ligand>
        <name>substrate</name>
    </ligand>
</feature>
<feature type="binding site" evidence="1">
    <location>
        <position position="113"/>
    </location>
    <ligand>
        <name>substrate</name>
    </ligand>
</feature>
<feature type="binding site" evidence="1">
    <location>
        <position position="117"/>
    </location>
    <ligand>
        <name>substrate</name>
    </ligand>
</feature>
<feature type="binding site" description="axial binding residue" evidence="1">
    <location>
        <position position="240"/>
    </location>
    <ligand>
        <name>heme</name>
        <dbReference type="ChEBI" id="CHEBI:30413"/>
    </ligand>
    <ligandPart>
        <name>Fe</name>
        <dbReference type="ChEBI" id="CHEBI:18248"/>
    </ligandPart>
</feature>
<feature type="binding site" evidence="1">
    <location>
        <position position="254"/>
    </location>
    <ligand>
        <name>substrate</name>
    </ligand>
</feature>
<evidence type="ECO:0000255" key="1">
    <source>
        <dbReference type="HAMAP-Rule" id="MF_01972"/>
    </source>
</evidence>
<sequence>MNDNLKPADIVREEKAQLDFSRAMSYGDYLHLDAILGAQQPLSPAHDEMLFIIQHQTSELWMKLMLHELRAAIANVAQDELGSAFKKLARVSKIMEQLVHAWDVLATMTPPEYSAIRPYLASSSGFQSAQYRCIEFALGNKNAAMLKPHAHRPDLLALVTAAFEAPSLYDEALRLLARRGLSVPASHTERDWTQGYVENDAVESAWLTVYRDPKQYWDLYQLGEELTDLEDAFRLWRFRHVTTVERVIGFKRGTGGTGGVSYLRKMLDVVLFPEIWKLRTDL</sequence>
<reference key="1">
    <citation type="journal article" date="2009" name="Environ. Microbiol.">
        <title>The genome of Polaromonas naphthalenivorans strain CJ2, isolated from coal tar-contaminated sediment, reveals physiological and metabolic versatility and evolution through extensive horizontal gene transfer.</title>
        <authorList>
            <person name="Yagi J.M."/>
            <person name="Sims D."/>
            <person name="Brettin T."/>
            <person name="Bruce D."/>
            <person name="Madsen E.L."/>
        </authorList>
    </citation>
    <scope>NUCLEOTIDE SEQUENCE [LARGE SCALE GENOMIC DNA]</scope>
    <source>
        <strain>CJ2</strain>
    </source>
</reference>
<comment type="function">
    <text evidence="1">Heme-dependent dioxygenase that catalyzes the oxidative cleavage of the L-tryptophan (L-Trp) pyrrole ring and converts L-tryptophan to N-formyl-L-kynurenine. Catalyzes the oxidative cleavage of the indole moiety.</text>
</comment>
<comment type="catalytic activity">
    <reaction evidence="1">
        <text>L-tryptophan + O2 = N-formyl-L-kynurenine</text>
        <dbReference type="Rhea" id="RHEA:24536"/>
        <dbReference type="ChEBI" id="CHEBI:15379"/>
        <dbReference type="ChEBI" id="CHEBI:57912"/>
        <dbReference type="ChEBI" id="CHEBI:58629"/>
        <dbReference type="EC" id="1.13.11.11"/>
    </reaction>
</comment>
<comment type="cofactor">
    <cofactor evidence="1">
        <name>heme</name>
        <dbReference type="ChEBI" id="CHEBI:30413"/>
    </cofactor>
    <text evidence="1">Binds 1 heme group per subunit.</text>
</comment>
<comment type="pathway">
    <text evidence="1">Amino-acid degradation; L-tryptophan degradation via kynurenine pathway; L-kynurenine from L-tryptophan: step 1/2.</text>
</comment>
<comment type="subunit">
    <text evidence="1">Homotetramer.</text>
</comment>
<comment type="similarity">
    <text evidence="1">Belongs to the tryptophan 2,3-dioxygenase family.</text>
</comment>
<dbReference type="EC" id="1.13.11.11" evidence="1"/>
<dbReference type="EMBL" id="CP000529">
    <property type="protein sequence ID" value="ABM38319.1"/>
    <property type="molecule type" value="Genomic_DNA"/>
</dbReference>
<dbReference type="RefSeq" id="WP_011802391.1">
    <property type="nucleotide sequence ID" value="NC_008781.1"/>
</dbReference>
<dbReference type="SMR" id="A1VRP1"/>
<dbReference type="STRING" id="365044.Pnap_3020"/>
<dbReference type="KEGG" id="pna:Pnap_3020"/>
<dbReference type="eggNOG" id="COG3483">
    <property type="taxonomic scope" value="Bacteria"/>
</dbReference>
<dbReference type="HOGENOM" id="CLU_063240_0_0_4"/>
<dbReference type="OrthoDB" id="9776847at2"/>
<dbReference type="UniPathway" id="UPA00333">
    <property type="reaction ID" value="UER00453"/>
</dbReference>
<dbReference type="Proteomes" id="UP000000644">
    <property type="component" value="Chromosome"/>
</dbReference>
<dbReference type="GO" id="GO:0020037">
    <property type="term" value="F:heme binding"/>
    <property type="evidence" value="ECO:0000250"/>
    <property type="project" value="UniProtKB"/>
</dbReference>
<dbReference type="GO" id="GO:0046872">
    <property type="term" value="F:metal ion binding"/>
    <property type="evidence" value="ECO:0007669"/>
    <property type="project" value="UniProtKB-KW"/>
</dbReference>
<dbReference type="GO" id="GO:0004833">
    <property type="term" value="F:tryptophan 2,3-dioxygenase activity"/>
    <property type="evidence" value="ECO:0000250"/>
    <property type="project" value="UniProtKB"/>
</dbReference>
<dbReference type="GO" id="GO:0019442">
    <property type="term" value="P:L-tryptophan catabolic process to acetyl-CoA"/>
    <property type="evidence" value="ECO:0007669"/>
    <property type="project" value="TreeGrafter"/>
</dbReference>
<dbReference type="GO" id="GO:0019441">
    <property type="term" value="P:L-tryptophan catabolic process to kynurenine"/>
    <property type="evidence" value="ECO:0000250"/>
    <property type="project" value="UniProtKB"/>
</dbReference>
<dbReference type="FunFam" id="1.20.58.480:FF:000001">
    <property type="entry name" value="Tryptophan 2,3-dioxygenase"/>
    <property type="match status" value="1"/>
</dbReference>
<dbReference type="Gene3D" id="1.20.58.480">
    <property type="match status" value="1"/>
</dbReference>
<dbReference type="HAMAP" id="MF_01972">
    <property type="entry name" value="T23O"/>
    <property type="match status" value="1"/>
</dbReference>
<dbReference type="InterPro" id="IPR037217">
    <property type="entry name" value="Trp/Indoleamine_2_3_dOase-like"/>
</dbReference>
<dbReference type="InterPro" id="IPR017485">
    <property type="entry name" value="Trp_2-3-dOase_bac"/>
</dbReference>
<dbReference type="InterPro" id="IPR004981">
    <property type="entry name" value="Trp_2_3_dOase"/>
</dbReference>
<dbReference type="NCBIfam" id="TIGR03036">
    <property type="entry name" value="trp_2_3_diox"/>
    <property type="match status" value="1"/>
</dbReference>
<dbReference type="PANTHER" id="PTHR10138">
    <property type="entry name" value="TRYPTOPHAN 2,3-DIOXYGENASE"/>
    <property type="match status" value="1"/>
</dbReference>
<dbReference type="PANTHER" id="PTHR10138:SF0">
    <property type="entry name" value="TRYPTOPHAN 2,3-DIOXYGENASE"/>
    <property type="match status" value="1"/>
</dbReference>
<dbReference type="Pfam" id="PF03301">
    <property type="entry name" value="Trp_dioxygenase"/>
    <property type="match status" value="1"/>
</dbReference>
<dbReference type="SUPFAM" id="SSF140959">
    <property type="entry name" value="Indolic compounds 2,3-dioxygenase-like"/>
    <property type="match status" value="1"/>
</dbReference>
<keyword id="KW-0223">Dioxygenase</keyword>
<keyword id="KW-0349">Heme</keyword>
<keyword id="KW-0408">Iron</keyword>
<keyword id="KW-0479">Metal-binding</keyword>
<keyword id="KW-0560">Oxidoreductase</keyword>
<keyword id="KW-1185">Reference proteome</keyword>
<keyword id="KW-0823">Tryptophan catabolism</keyword>
<accession>A1VRP1</accession>
<proteinExistence type="inferred from homology"/>
<organism>
    <name type="scientific">Polaromonas naphthalenivorans (strain CJ2)</name>
    <dbReference type="NCBI Taxonomy" id="365044"/>
    <lineage>
        <taxon>Bacteria</taxon>
        <taxon>Pseudomonadati</taxon>
        <taxon>Pseudomonadota</taxon>
        <taxon>Betaproteobacteria</taxon>
        <taxon>Burkholderiales</taxon>
        <taxon>Comamonadaceae</taxon>
        <taxon>Polaromonas</taxon>
    </lineage>
</organism>
<protein>
    <recommendedName>
        <fullName evidence="1">Tryptophan 2,3-dioxygenase</fullName>
        <shortName evidence="1">TDO</shortName>
        <ecNumber evidence="1">1.13.11.11</ecNumber>
    </recommendedName>
    <alternativeName>
        <fullName evidence="1">Tryptamin 2,3-dioxygenase</fullName>
    </alternativeName>
    <alternativeName>
        <fullName evidence="1">Tryptophan oxygenase</fullName>
        <shortName evidence="1">TO</shortName>
        <shortName evidence="1">TRPO</shortName>
    </alternativeName>
    <alternativeName>
        <fullName evidence="1">Tryptophan pyrrolase</fullName>
    </alternativeName>
    <alternativeName>
        <fullName evidence="1">Tryptophanase</fullName>
    </alternativeName>
</protein>
<name>T23O_POLNA</name>
<gene>
    <name evidence="1" type="primary">kynA</name>
    <name type="ordered locus">Pnap_3020</name>
</gene>